<protein>
    <recommendedName>
        <fullName>Electron transfer flavoprotein subunit alpha</fullName>
        <shortName>Alpha-ETF</shortName>
    </recommendedName>
    <alternativeName>
        <fullName>Electron transfer flavoprotein large subunit</fullName>
        <shortName>ETFLS</shortName>
    </alternativeName>
</protein>
<dbReference type="EMBL" id="Z75208">
    <property type="protein sequence ID" value="CAA99575.1"/>
    <property type="molecule type" value="Genomic_DNA"/>
</dbReference>
<dbReference type="EMBL" id="AL009126">
    <property type="protein sequence ID" value="CAB14812.1"/>
    <property type="molecule type" value="Genomic_DNA"/>
</dbReference>
<dbReference type="PIR" id="D69620">
    <property type="entry name" value="D69620"/>
</dbReference>
<dbReference type="RefSeq" id="NP_390730.1">
    <property type="nucleotide sequence ID" value="NC_000964.3"/>
</dbReference>
<dbReference type="RefSeq" id="WP_004398999.1">
    <property type="nucleotide sequence ID" value="NZ_OZ025638.1"/>
</dbReference>
<dbReference type="SMR" id="P94551"/>
<dbReference type="FunCoup" id="P94551">
    <property type="interactions" value="512"/>
</dbReference>
<dbReference type="STRING" id="224308.BSU28520"/>
<dbReference type="jPOST" id="P94551"/>
<dbReference type="PaxDb" id="224308-BSU28520"/>
<dbReference type="EnsemblBacteria" id="CAB14812">
    <property type="protein sequence ID" value="CAB14812"/>
    <property type="gene ID" value="BSU_28520"/>
</dbReference>
<dbReference type="GeneID" id="936520"/>
<dbReference type="KEGG" id="bsu:BSU28520"/>
<dbReference type="PATRIC" id="fig|224308.179.peg.3099"/>
<dbReference type="eggNOG" id="COG2025">
    <property type="taxonomic scope" value="Bacteria"/>
</dbReference>
<dbReference type="InParanoid" id="P94551"/>
<dbReference type="OrthoDB" id="9770286at2"/>
<dbReference type="PhylomeDB" id="P94551"/>
<dbReference type="BioCyc" id="BSUB:BSU28520-MONOMER"/>
<dbReference type="Proteomes" id="UP000001570">
    <property type="component" value="Chromosome"/>
</dbReference>
<dbReference type="GO" id="GO:0009055">
    <property type="term" value="F:electron transfer activity"/>
    <property type="evidence" value="ECO:0000318"/>
    <property type="project" value="GO_Central"/>
</dbReference>
<dbReference type="GO" id="GO:0050660">
    <property type="term" value="F:flavin adenine dinucleotide binding"/>
    <property type="evidence" value="ECO:0000318"/>
    <property type="project" value="GO_Central"/>
</dbReference>
<dbReference type="GO" id="GO:0033539">
    <property type="term" value="P:fatty acid beta-oxidation using acyl-CoA dehydrogenase"/>
    <property type="evidence" value="ECO:0000318"/>
    <property type="project" value="GO_Central"/>
</dbReference>
<dbReference type="CDD" id="cd01715">
    <property type="entry name" value="ETF_alpha"/>
    <property type="match status" value="1"/>
</dbReference>
<dbReference type="FunFam" id="3.40.50.1220:FF:000001">
    <property type="entry name" value="Electron transfer flavoprotein, alpha subunit"/>
    <property type="match status" value="1"/>
</dbReference>
<dbReference type="Gene3D" id="3.40.50.620">
    <property type="entry name" value="HUPs"/>
    <property type="match status" value="1"/>
</dbReference>
<dbReference type="Gene3D" id="3.40.50.1220">
    <property type="entry name" value="TPP-binding domain"/>
    <property type="match status" value="1"/>
</dbReference>
<dbReference type="InterPro" id="IPR029035">
    <property type="entry name" value="DHS-like_NAD/FAD-binding_dom"/>
</dbReference>
<dbReference type="InterPro" id="IPR014730">
    <property type="entry name" value="ETF_a/b_N"/>
</dbReference>
<dbReference type="InterPro" id="IPR001308">
    <property type="entry name" value="ETF_a/FixB"/>
</dbReference>
<dbReference type="InterPro" id="IPR033947">
    <property type="entry name" value="ETF_alpha_N"/>
</dbReference>
<dbReference type="InterPro" id="IPR014731">
    <property type="entry name" value="ETF_asu_C"/>
</dbReference>
<dbReference type="InterPro" id="IPR018206">
    <property type="entry name" value="ETF_asu_C_CS"/>
</dbReference>
<dbReference type="InterPro" id="IPR014729">
    <property type="entry name" value="Rossmann-like_a/b/a_fold"/>
</dbReference>
<dbReference type="PANTHER" id="PTHR43153">
    <property type="entry name" value="ELECTRON TRANSFER FLAVOPROTEIN ALPHA"/>
    <property type="match status" value="1"/>
</dbReference>
<dbReference type="PANTHER" id="PTHR43153:SF1">
    <property type="entry name" value="ELECTRON TRANSFER FLAVOPROTEIN SUBUNIT ALPHA, MITOCHONDRIAL"/>
    <property type="match status" value="1"/>
</dbReference>
<dbReference type="Pfam" id="PF01012">
    <property type="entry name" value="ETF"/>
    <property type="match status" value="1"/>
</dbReference>
<dbReference type="Pfam" id="PF00766">
    <property type="entry name" value="ETF_alpha"/>
    <property type="match status" value="1"/>
</dbReference>
<dbReference type="PIRSF" id="PIRSF000089">
    <property type="entry name" value="Electra_flavoP_a"/>
    <property type="match status" value="1"/>
</dbReference>
<dbReference type="SMART" id="SM00893">
    <property type="entry name" value="ETF"/>
    <property type="match status" value="1"/>
</dbReference>
<dbReference type="SUPFAM" id="SSF52402">
    <property type="entry name" value="Adenine nucleotide alpha hydrolases-like"/>
    <property type="match status" value="1"/>
</dbReference>
<dbReference type="SUPFAM" id="SSF52467">
    <property type="entry name" value="DHS-like NAD/FAD-binding domain"/>
    <property type="match status" value="1"/>
</dbReference>
<dbReference type="PROSITE" id="PS00696">
    <property type="entry name" value="ETF_ALPHA"/>
    <property type="match status" value="1"/>
</dbReference>
<reference key="1">
    <citation type="journal article" date="1996" name="Microbiology">
        <title>The dnaB-pheA (256 degrees-240 degrees) region of the Bacillus subtilis chromosome containing genes responsible for stress responses, the utilization of plant cell walls and primary metabolism.</title>
        <authorList>
            <person name="Wipat A."/>
            <person name="Carter N."/>
            <person name="Brignell C.S."/>
            <person name="Guy J.B."/>
            <person name="Piper K."/>
            <person name="Sanders J."/>
            <person name="Emmerson P.T."/>
            <person name="Harwood C.R."/>
        </authorList>
    </citation>
    <scope>NUCLEOTIDE SEQUENCE [GENOMIC DNA]</scope>
    <source>
        <strain>168</strain>
    </source>
</reference>
<reference key="2">
    <citation type="journal article" date="1997" name="Nature">
        <title>The complete genome sequence of the Gram-positive bacterium Bacillus subtilis.</title>
        <authorList>
            <person name="Kunst F."/>
            <person name="Ogasawara N."/>
            <person name="Moszer I."/>
            <person name="Albertini A.M."/>
            <person name="Alloni G."/>
            <person name="Azevedo V."/>
            <person name="Bertero M.G."/>
            <person name="Bessieres P."/>
            <person name="Bolotin A."/>
            <person name="Borchert S."/>
            <person name="Borriss R."/>
            <person name="Boursier L."/>
            <person name="Brans A."/>
            <person name="Braun M."/>
            <person name="Brignell S.C."/>
            <person name="Bron S."/>
            <person name="Brouillet S."/>
            <person name="Bruschi C.V."/>
            <person name="Caldwell B."/>
            <person name="Capuano V."/>
            <person name="Carter N.M."/>
            <person name="Choi S.-K."/>
            <person name="Codani J.-J."/>
            <person name="Connerton I.F."/>
            <person name="Cummings N.J."/>
            <person name="Daniel R.A."/>
            <person name="Denizot F."/>
            <person name="Devine K.M."/>
            <person name="Duesterhoeft A."/>
            <person name="Ehrlich S.D."/>
            <person name="Emmerson P.T."/>
            <person name="Entian K.-D."/>
            <person name="Errington J."/>
            <person name="Fabret C."/>
            <person name="Ferrari E."/>
            <person name="Foulger D."/>
            <person name="Fritz C."/>
            <person name="Fujita M."/>
            <person name="Fujita Y."/>
            <person name="Fuma S."/>
            <person name="Galizzi A."/>
            <person name="Galleron N."/>
            <person name="Ghim S.-Y."/>
            <person name="Glaser P."/>
            <person name="Goffeau A."/>
            <person name="Golightly E.J."/>
            <person name="Grandi G."/>
            <person name="Guiseppi G."/>
            <person name="Guy B.J."/>
            <person name="Haga K."/>
            <person name="Haiech J."/>
            <person name="Harwood C.R."/>
            <person name="Henaut A."/>
            <person name="Hilbert H."/>
            <person name="Holsappel S."/>
            <person name="Hosono S."/>
            <person name="Hullo M.-F."/>
            <person name="Itaya M."/>
            <person name="Jones L.-M."/>
            <person name="Joris B."/>
            <person name="Karamata D."/>
            <person name="Kasahara Y."/>
            <person name="Klaerr-Blanchard M."/>
            <person name="Klein C."/>
            <person name="Kobayashi Y."/>
            <person name="Koetter P."/>
            <person name="Koningstein G."/>
            <person name="Krogh S."/>
            <person name="Kumano M."/>
            <person name="Kurita K."/>
            <person name="Lapidus A."/>
            <person name="Lardinois S."/>
            <person name="Lauber J."/>
            <person name="Lazarevic V."/>
            <person name="Lee S.-M."/>
            <person name="Levine A."/>
            <person name="Liu H."/>
            <person name="Masuda S."/>
            <person name="Mauel C."/>
            <person name="Medigue C."/>
            <person name="Medina N."/>
            <person name="Mellado R.P."/>
            <person name="Mizuno M."/>
            <person name="Moestl D."/>
            <person name="Nakai S."/>
            <person name="Noback M."/>
            <person name="Noone D."/>
            <person name="O'Reilly M."/>
            <person name="Ogawa K."/>
            <person name="Ogiwara A."/>
            <person name="Oudega B."/>
            <person name="Park S.-H."/>
            <person name="Parro V."/>
            <person name="Pohl T.M."/>
            <person name="Portetelle D."/>
            <person name="Porwollik S."/>
            <person name="Prescott A.M."/>
            <person name="Presecan E."/>
            <person name="Pujic P."/>
            <person name="Purnelle B."/>
            <person name="Rapoport G."/>
            <person name="Rey M."/>
            <person name="Reynolds S."/>
            <person name="Rieger M."/>
            <person name="Rivolta C."/>
            <person name="Rocha E."/>
            <person name="Roche B."/>
            <person name="Rose M."/>
            <person name="Sadaie Y."/>
            <person name="Sato T."/>
            <person name="Scanlan E."/>
            <person name="Schleich S."/>
            <person name="Schroeter R."/>
            <person name="Scoffone F."/>
            <person name="Sekiguchi J."/>
            <person name="Sekowska A."/>
            <person name="Seror S.J."/>
            <person name="Serror P."/>
            <person name="Shin B.-S."/>
            <person name="Soldo B."/>
            <person name="Sorokin A."/>
            <person name="Tacconi E."/>
            <person name="Takagi T."/>
            <person name="Takahashi H."/>
            <person name="Takemaru K."/>
            <person name="Takeuchi M."/>
            <person name="Tamakoshi A."/>
            <person name="Tanaka T."/>
            <person name="Terpstra P."/>
            <person name="Tognoni A."/>
            <person name="Tosato V."/>
            <person name="Uchiyama S."/>
            <person name="Vandenbol M."/>
            <person name="Vannier F."/>
            <person name="Vassarotti A."/>
            <person name="Viari A."/>
            <person name="Wambutt R."/>
            <person name="Wedler E."/>
            <person name="Wedler H."/>
            <person name="Weitzenegger T."/>
            <person name="Winters P."/>
            <person name="Wipat A."/>
            <person name="Yamamoto H."/>
            <person name="Yamane K."/>
            <person name="Yasumoto K."/>
            <person name="Yata K."/>
            <person name="Yoshida K."/>
            <person name="Yoshikawa H.-F."/>
            <person name="Zumstein E."/>
            <person name="Yoshikawa H."/>
            <person name="Danchin A."/>
        </authorList>
    </citation>
    <scope>NUCLEOTIDE SEQUENCE [LARGE SCALE GENOMIC DNA]</scope>
    <source>
        <strain>168</strain>
    </source>
</reference>
<accession>P94551</accession>
<keyword id="KW-0249">Electron transport</keyword>
<keyword id="KW-0274">FAD</keyword>
<keyword id="KW-0285">Flavoprotein</keyword>
<keyword id="KW-1185">Reference proteome</keyword>
<keyword id="KW-0813">Transport</keyword>
<proteinExistence type="inferred from homology"/>
<comment type="function">
    <text evidence="1">The electron transfer flavoprotein serves as a specific electron acceptor for other dehydrogenases. It transfers the electrons to the main respiratory chain via ETF-ubiquinone oxidoreductase (ETF dehydrogenase) (By similarity).</text>
</comment>
<comment type="cofactor">
    <cofactor evidence="1">
        <name>FAD</name>
        <dbReference type="ChEBI" id="CHEBI:57692"/>
    </cofactor>
    <text evidence="1">Binds 1 FAD per dimer.</text>
</comment>
<comment type="subunit">
    <text>Heterodimer of an alpha and a beta subunit.</text>
</comment>
<comment type="similarity">
    <text evidence="3">Belongs to the ETF alpha-subunit/FixB family.</text>
</comment>
<sequence>MGKKVIVLGEIRDGELRNVTFEAIAAGRTISGDGEVIGVLIGENVQSIAQELIHYGADKVLTAEDPKLKTYTADGYSQVMRGVIEQENPDSVIFGHTAMGKDLSPKLAARLQTGLISDAIDVSVTGGNVVFTRPIYSGKAFERVISTDPMIFATIRPNNIQASEKDTSRSGSIESIDVSLTDLRTVIQEVVKKTADGVDLSEAKIIVAGGRGVKSKEGFQPLQELAEVLGAAVGASRGACDADYCDYALQIGQTGKVVTPDLYIACGISGAIQHLAGMSNSKVIVAINKDPEADIFKIADYGIVGDLFEVVPLLTEEFKQLNIHS</sequence>
<gene>
    <name type="primary">etfA</name>
    <name type="ordered locus">BSU28520</name>
</gene>
<organism>
    <name type="scientific">Bacillus subtilis (strain 168)</name>
    <dbReference type="NCBI Taxonomy" id="224308"/>
    <lineage>
        <taxon>Bacteria</taxon>
        <taxon>Bacillati</taxon>
        <taxon>Bacillota</taxon>
        <taxon>Bacilli</taxon>
        <taxon>Bacillales</taxon>
        <taxon>Bacillaceae</taxon>
        <taxon>Bacillus</taxon>
    </lineage>
</organism>
<feature type="chain" id="PRO_0000167845" description="Electron transfer flavoprotein subunit alpha">
    <location>
        <begin position="1"/>
        <end position="325"/>
    </location>
</feature>
<feature type="binding site" evidence="2">
    <location>
        <begin position="262"/>
        <end position="290"/>
    </location>
    <ligand>
        <name>FAD</name>
        <dbReference type="ChEBI" id="CHEBI:57692"/>
    </ligand>
</feature>
<name>ETFA_BACSU</name>
<evidence type="ECO:0000250" key="1"/>
<evidence type="ECO:0000255" key="2"/>
<evidence type="ECO:0000305" key="3"/>